<organism>
    <name type="scientific">Burkholderia mallei (strain SAVP1)</name>
    <dbReference type="NCBI Taxonomy" id="320388"/>
    <lineage>
        <taxon>Bacteria</taxon>
        <taxon>Pseudomonadati</taxon>
        <taxon>Pseudomonadota</taxon>
        <taxon>Betaproteobacteria</taxon>
        <taxon>Burkholderiales</taxon>
        <taxon>Burkholderiaceae</taxon>
        <taxon>Burkholderia</taxon>
        <taxon>pseudomallei group</taxon>
    </lineage>
</organism>
<accession>A1V8A0</accession>
<name>RL2_BURMS</name>
<evidence type="ECO:0000255" key="1">
    <source>
        <dbReference type="HAMAP-Rule" id="MF_01320"/>
    </source>
</evidence>
<evidence type="ECO:0000256" key="2">
    <source>
        <dbReference type="SAM" id="MobiDB-lite"/>
    </source>
</evidence>
<evidence type="ECO:0000305" key="3"/>
<sequence length="275" mass="30258">MAIVKVKPTSPGRRAMVKVVNKDLHKGKPHAALLDTQSSKAGRNNNGRITTRHQGGGHKQHYRVIDFRRTKDGIPAKVERLEYDPNRSANIALVLYADGERRYIIAPKGVTVGQQLMSGSEAPIRAGNTLPIRNIPVGTTIHCIEMLPGKGAQMARSAGTSAMLLAREGLYAQVRLRSGEIRRVHIECRATIGEVGNEEHSLRQIGKAGANRWRGIRPTVRGVAMNPIDHPHGGGEGRTAAGRDPVSPWGTPTKGFRTRRNKRTTTMIVQRRHKR</sequence>
<reference key="1">
    <citation type="journal article" date="2010" name="Genome Biol. Evol.">
        <title>Continuing evolution of Burkholderia mallei through genome reduction and large-scale rearrangements.</title>
        <authorList>
            <person name="Losada L."/>
            <person name="Ronning C.M."/>
            <person name="DeShazer D."/>
            <person name="Woods D."/>
            <person name="Fedorova N."/>
            <person name="Kim H.S."/>
            <person name="Shabalina S.A."/>
            <person name="Pearson T.R."/>
            <person name="Brinkac L."/>
            <person name="Tan P."/>
            <person name="Nandi T."/>
            <person name="Crabtree J."/>
            <person name="Badger J."/>
            <person name="Beckstrom-Sternberg S."/>
            <person name="Saqib M."/>
            <person name="Schutzer S.E."/>
            <person name="Keim P."/>
            <person name="Nierman W.C."/>
        </authorList>
    </citation>
    <scope>NUCLEOTIDE SEQUENCE [LARGE SCALE GENOMIC DNA]</scope>
    <source>
        <strain>SAVP1</strain>
    </source>
</reference>
<feature type="chain" id="PRO_0000309885" description="Large ribosomal subunit protein uL2">
    <location>
        <begin position="1"/>
        <end position="275"/>
    </location>
</feature>
<feature type="region of interest" description="Disordered" evidence="2">
    <location>
        <begin position="38"/>
        <end position="60"/>
    </location>
</feature>
<feature type="region of interest" description="Disordered" evidence="2">
    <location>
        <begin position="224"/>
        <end position="257"/>
    </location>
</feature>
<feature type="compositionally biased region" description="Polar residues" evidence="2">
    <location>
        <begin position="38"/>
        <end position="53"/>
    </location>
</feature>
<keyword id="KW-0687">Ribonucleoprotein</keyword>
<keyword id="KW-0689">Ribosomal protein</keyword>
<keyword id="KW-0694">RNA-binding</keyword>
<keyword id="KW-0699">rRNA-binding</keyword>
<comment type="function">
    <text evidence="1">One of the primary rRNA binding proteins. Required for association of the 30S and 50S subunits to form the 70S ribosome, for tRNA binding and peptide bond formation. It has been suggested to have peptidyltransferase activity; this is somewhat controversial. Makes several contacts with the 16S rRNA in the 70S ribosome.</text>
</comment>
<comment type="subunit">
    <text evidence="1">Part of the 50S ribosomal subunit. Forms a bridge to the 30S subunit in the 70S ribosome.</text>
</comment>
<comment type="similarity">
    <text evidence="1">Belongs to the universal ribosomal protein uL2 family.</text>
</comment>
<dbReference type="EMBL" id="CP000526">
    <property type="protein sequence ID" value="ABM51017.1"/>
    <property type="molecule type" value="Genomic_DNA"/>
</dbReference>
<dbReference type="RefSeq" id="WP_004199274.1">
    <property type="nucleotide sequence ID" value="NC_008785.1"/>
</dbReference>
<dbReference type="SMR" id="A1V8A0"/>
<dbReference type="GeneID" id="93061829"/>
<dbReference type="KEGG" id="bmv:BMASAVP1_A3166"/>
<dbReference type="HOGENOM" id="CLU_036235_2_1_4"/>
<dbReference type="GO" id="GO:0015934">
    <property type="term" value="C:large ribosomal subunit"/>
    <property type="evidence" value="ECO:0007669"/>
    <property type="project" value="InterPro"/>
</dbReference>
<dbReference type="GO" id="GO:0019843">
    <property type="term" value="F:rRNA binding"/>
    <property type="evidence" value="ECO:0007669"/>
    <property type="project" value="UniProtKB-UniRule"/>
</dbReference>
<dbReference type="GO" id="GO:0003735">
    <property type="term" value="F:structural constituent of ribosome"/>
    <property type="evidence" value="ECO:0007669"/>
    <property type="project" value="InterPro"/>
</dbReference>
<dbReference type="GO" id="GO:0016740">
    <property type="term" value="F:transferase activity"/>
    <property type="evidence" value="ECO:0007669"/>
    <property type="project" value="InterPro"/>
</dbReference>
<dbReference type="GO" id="GO:0002181">
    <property type="term" value="P:cytoplasmic translation"/>
    <property type="evidence" value="ECO:0007669"/>
    <property type="project" value="TreeGrafter"/>
</dbReference>
<dbReference type="FunFam" id="2.30.30.30:FF:000001">
    <property type="entry name" value="50S ribosomal protein L2"/>
    <property type="match status" value="1"/>
</dbReference>
<dbReference type="FunFam" id="2.40.50.140:FF:000003">
    <property type="entry name" value="50S ribosomal protein L2"/>
    <property type="match status" value="1"/>
</dbReference>
<dbReference type="FunFam" id="4.10.950.10:FF:000001">
    <property type="entry name" value="50S ribosomal protein L2"/>
    <property type="match status" value="1"/>
</dbReference>
<dbReference type="Gene3D" id="2.30.30.30">
    <property type="match status" value="1"/>
</dbReference>
<dbReference type="Gene3D" id="2.40.50.140">
    <property type="entry name" value="Nucleic acid-binding proteins"/>
    <property type="match status" value="1"/>
</dbReference>
<dbReference type="Gene3D" id="4.10.950.10">
    <property type="entry name" value="Ribosomal protein L2, domain 3"/>
    <property type="match status" value="1"/>
</dbReference>
<dbReference type="HAMAP" id="MF_01320_B">
    <property type="entry name" value="Ribosomal_uL2_B"/>
    <property type="match status" value="1"/>
</dbReference>
<dbReference type="InterPro" id="IPR012340">
    <property type="entry name" value="NA-bd_OB-fold"/>
</dbReference>
<dbReference type="InterPro" id="IPR014722">
    <property type="entry name" value="Rib_uL2_dom2"/>
</dbReference>
<dbReference type="InterPro" id="IPR002171">
    <property type="entry name" value="Ribosomal_uL2"/>
</dbReference>
<dbReference type="InterPro" id="IPR005880">
    <property type="entry name" value="Ribosomal_uL2_bac/org-type"/>
</dbReference>
<dbReference type="InterPro" id="IPR022669">
    <property type="entry name" value="Ribosomal_uL2_C"/>
</dbReference>
<dbReference type="InterPro" id="IPR022671">
    <property type="entry name" value="Ribosomal_uL2_CS"/>
</dbReference>
<dbReference type="InterPro" id="IPR014726">
    <property type="entry name" value="Ribosomal_uL2_dom3"/>
</dbReference>
<dbReference type="InterPro" id="IPR022666">
    <property type="entry name" value="Ribosomal_uL2_RNA-bd_dom"/>
</dbReference>
<dbReference type="InterPro" id="IPR008991">
    <property type="entry name" value="Translation_prot_SH3-like_sf"/>
</dbReference>
<dbReference type="NCBIfam" id="TIGR01171">
    <property type="entry name" value="rplB_bact"/>
    <property type="match status" value="1"/>
</dbReference>
<dbReference type="PANTHER" id="PTHR13691:SF5">
    <property type="entry name" value="LARGE RIBOSOMAL SUBUNIT PROTEIN UL2M"/>
    <property type="match status" value="1"/>
</dbReference>
<dbReference type="PANTHER" id="PTHR13691">
    <property type="entry name" value="RIBOSOMAL PROTEIN L2"/>
    <property type="match status" value="1"/>
</dbReference>
<dbReference type="Pfam" id="PF00181">
    <property type="entry name" value="Ribosomal_L2"/>
    <property type="match status" value="1"/>
</dbReference>
<dbReference type="Pfam" id="PF03947">
    <property type="entry name" value="Ribosomal_L2_C"/>
    <property type="match status" value="1"/>
</dbReference>
<dbReference type="PIRSF" id="PIRSF002158">
    <property type="entry name" value="Ribosomal_L2"/>
    <property type="match status" value="1"/>
</dbReference>
<dbReference type="SMART" id="SM01383">
    <property type="entry name" value="Ribosomal_L2"/>
    <property type="match status" value="1"/>
</dbReference>
<dbReference type="SMART" id="SM01382">
    <property type="entry name" value="Ribosomal_L2_C"/>
    <property type="match status" value="1"/>
</dbReference>
<dbReference type="SUPFAM" id="SSF50249">
    <property type="entry name" value="Nucleic acid-binding proteins"/>
    <property type="match status" value="1"/>
</dbReference>
<dbReference type="SUPFAM" id="SSF50104">
    <property type="entry name" value="Translation proteins SH3-like domain"/>
    <property type="match status" value="1"/>
</dbReference>
<dbReference type="PROSITE" id="PS00467">
    <property type="entry name" value="RIBOSOMAL_L2"/>
    <property type="match status" value="1"/>
</dbReference>
<proteinExistence type="inferred from homology"/>
<gene>
    <name evidence="1" type="primary">rplB</name>
    <name type="ordered locus">BMASAVP1_A3166</name>
</gene>
<protein>
    <recommendedName>
        <fullName evidence="1">Large ribosomal subunit protein uL2</fullName>
    </recommendedName>
    <alternativeName>
        <fullName evidence="3">50S ribosomal protein L2</fullName>
    </alternativeName>
</protein>